<organism>
    <name type="scientific">Shewanella baltica (strain OS155 / ATCC BAA-1091)</name>
    <dbReference type="NCBI Taxonomy" id="325240"/>
    <lineage>
        <taxon>Bacteria</taxon>
        <taxon>Pseudomonadati</taxon>
        <taxon>Pseudomonadota</taxon>
        <taxon>Gammaproteobacteria</taxon>
        <taxon>Alteromonadales</taxon>
        <taxon>Shewanellaceae</taxon>
        <taxon>Shewanella</taxon>
    </lineage>
</organism>
<reference key="1">
    <citation type="submission" date="2007-02" db="EMBL/GenBank/DDBJ databases">
        <title>Complete sequence of chromosome of Shewanella baltica OS155.</title>
        <authorList>
            <consortium name="US DOE Joint Genome Institute"/>
            <person name="Copeland A."/>
            <person name="Lucas S."/>
            <person name="Lapidus A."/>
            <person name="Barry K."/>
            <person name="Detter J.C."/>
            <person name="Glavina del Rio T."/>
            <person name="Hammon N."/>
            <person name="Israni S."/>
            <person name="Dalin E."/>
            <person name="Tice H."/>
            <person name="Pitluck S."/>
            <person name="Sims D.R."/>
            <person name="Brettin T."/>
            <person name="Bruce D."/>
            <person name="Han C."/>
            <person name="Tapia R."/>
            <person name="Brainard J."/>
            <person name="Schmutz J."/>
            <person name="Larimer F."/>
            <person name="Land M."/>
            <person name="Hauser L."/>
            <person name="Kyrpides N."/>
            <person name="Mikhailova N."/>
            <person name="Brettar I."/>
            <person name="Klappenbach J."/>
            <person name="Konstantinidis K."/>
            <person name="Rodrigues J."/>
            <person name="Tiedje J."/>
            <person name="Richardson P."/>
        </authorList>
    </citation>
    <scope>NUCLEOTIDE SEQUENCE [LARGE SCALE GENOMIC DNA]</scope>
    <source>
        <strain>OS155 / ATCC BAA-1091</strain>
    </source>
</reference>
<protein>
    <recommendedName>
        <fullName evidence="1">N-succinylarginine dihydrolase</fullName>
        <ecNumber evidence="1">3.5.3.23</ecNumber>
    </recommendedName>
</protein>
<accession>A3D5H7</accession>
<keyword id="KW-0056">Arginine metabolism</keyword>
<keyword id="KW-0378">Hydrolase</keyword>
<keyword id="KW-1185">Reference proteome</keyword>
<feature type="chain" id="PRO_1000065736" description="N-succinylarginine dihydrolase">
    <location>
        <begin position="1"/>
        <end position="444"/>
    </location>
</feature>
<feature type="active site" evidence="1">
    <location>
        <position position="174"/>
    </location>
</feature>
<feature type="active site" evidence="1">
    <location>
        <position position="250"/>
    </location>
</feature>
<feature type="active site" description="Nucleophile" evidence="1">
    <location>
        <position position="368"/>
    </location>
</feature>
<feature type="binding site" evidence="1">
    <location>
        <begin position="19"/>
        <end position="28"/>
    </location>
    <ligand>
        <name>substrate</name>
    </ligand>
</feature>
<feature type="binding site" evidence="1">
    <location>
        <position position="110"/>
    </location>
    <ligand>
        <name>substrate</name>
    </ligand>
</feature>
<feature type="binding site" evidence="1">
    <location>
        <begin position="137"/>
        <end position="138"/>
    </location>
    <ligand>
        <name>substrate</name>
    </ligand>
</feature>
<feature type="binding site" evidence="1">
    <location>
        <position position="214"/>
    </location>
    <ligand>
        <name>substrate</name>
    </ligand>
</feature>
<feature type="binding site" evidence="1">
    <location>
        <position position="252"/>
    </location>
    <ligand>
        <name>substrate</name>
    </ligand>
</feature>
<feature type="binding site" evidence="1">
    <location>
        <position position="362"/>
    </location>
    <ligand>
        <name>substrate</name>
    </ligand>
</feature>
<evidence type="ECO:0000255" key="1">
    <source>
        <dbReference type="HAMAP-Rule" id="MF_01172"/>
    </source>
</evidence>
<sequence>MKHFEANFDGLVGPTHNYAGLSFGNVASLSNAALVSNPKAAAKQGLQKAKALADMGMVQGMLAPQERPDLYTLRRIGFSGSDANVLKQAAKEAPMLLNACCSASSMWTANAATVSPSADTRDGKLHFTPANLVDKLHRSIEPLTTGRILTATFSDPHYFHHHSHLPEHNSFGDEGAANHTRLCNEYGHAGVELFVYGQEATNPNAPKPQKYPARQTLEASMAVARLHQLEEDNCVFIQQNPDVIDQGVFHNDVIAVGNQNVLFYHEQAFLNTQHKIDEIKRKLDTELYFIEVPTAKVAINDAVKSYLFNTQIITLPSGEMVIVAPTDCQENPAVFAYLNELLTLNTPIKQVLYFDVKQSMQNGGGPACLRLRVAMNEMEVAAVNQHTLMNDALFARLNLWVDKHYRDRLTTQDLADPQLIIESRTALDELTQIMKLGSVYQFQR</sequence>
<comment type="function">
    <text evidence="1">Catalyzes the hydrolysis of N(2)-succinylarginine into N(2)-succinylornithine, ammonia and CO(2).</text>
</comment>
<comment type="catalytic activity">
    <reaction evidence="1">
        <text>N(2)-succinyl-L-arginine + 2 H2O + 2 H(+) = N(2)-succinyl-L-ornithine + 2 NH4(+) + CO2</text>
        <dbReference type="Rhea" id="RHEA:19533"/>
        <dbReference type="ChEBI" id="CHEBI:15377"/>
        <dbReference type="ChEBI" id="CHEBI:15378"/>
        <dbReference type="ChEBI" id="CHEBI:16526"/>
        <dbReference type="ChEBI" id="CHEBI:28938"/>
        <dbReference type="ChEBI" id="CHEBI:58241"/>
        <dbReference type="ChEBI" id="CHEBI:58514"/>
        <dbReference type="EC" id="3.5.3.23"/>
    </reaction>
</comment>
<comment type="pathway">
    <text evidence="1">Amino-acid degradation; L-arginine degradation via AST pathway; L-glutamate and succinate from L-arginine: step 2/5.</text>
</comment>
<comment type="subunit">
    <text evidence="1">Homodimer.</text>
</comment>
<comment type="similarity">
    <text evidence="1">Belongs to the succinylarginine dihydrolase family.</text>
</comment>
<dbReference type="EC" id="3.5.3.23" evidence="1"/>
<dbReference type="EMBL" id="CP000563">
    <property type="protein sequence ID" value="ABN61990.1"/>
    <property type="molecule type" value="Genomic_DNA"/>
</dbReference>
<dbReference type="RefSeq" id="WP_011847017.1">
    <property type="nucleotide sequence ID" value="NC_009052.1"/>
</dbReference>
<dbReference type="SMR" id="A3D5H7"/>
<dbReference type="STRING" id="325240.Sbal_2497"/>
<dbReference type="KEGG" id="sbl:Sbal_2497"/>
<dbReference type="HOGENOM" id="CLU_053835_0_0_6"/>
<dbReference type="OrthoDB" id="248552at2"/>
<dbReference type="UniPathway" id="UPA00185">
    <property type="reaction ID" value="UER00280"/>
</dbReference>
<dbReference type="Proteomes" id="UP000001557">
    <property type="component" value="Chromosome"/>
</dbReference>
<dbReference type="GO" id="GO:0009015">
    <property type="term" value="F:N-succinylarginine dihydrolase activity"/>
    <property type="evidence" value="ECO:0007669"/>
    <property type="project" value="UniProtKB-UniRule"/>
</dbReference>
<dbReference type="GO" id="GO:0019544">
    <property type="term" value="P:arginine catabolic process to glutamate"/>
    <property type="evidence" value="ECO:0007669"/>
    <property type="project" value="UniProtKB-UniRule"/>
</dbReference>
<dbReference type="GO" id="GO:0019545">
    <property type="term" value="P:arginine catabolic process to succinate"/>
    <property type="evidence" value="ECO:0007669"/>
    <property type="project" value="UniProtKB-UniRule"/>
</dbReference>
<dbReference type="FunFam" id="3.75.10.20:FF:000001">
    <property type="entry name" value="N-succinylarginine dihydrolase"/>
    <property type="match status" value="1"/>
</dbReference>
<dbReference type="Gene3D" id="3.75.10.20">
    <property type="entry name" value="Succinylarginine dihydrolase"/>
    <property type="match status" value="1"/>
</dbReference>
<dbReference type="HAMAP" id="MF_01172">
    <property type="entry name" value="AstB"/>
    <property type="match status" value="1"/>
</dbReference>
<dbReference type="InterPro" id="IPR037031">
    <property type="entry name" value="AstB_sf"/>
</dbReference>
<dbReference type="InterPro" id="IPR007079">
    <property type="entry name" value="SuccinylArg_d-Hdrlase_AstB"/>
</dbReference>
<dbReference type="NCBIfam" id="TIGR03241">
    <property type="entry name" value="arg_catab_astB"/>
    <property type="match status" value="1"/>
</dbReference>
<dbReference type="NCBIfam" id="NF009789">
    <property type="entry name" value="PRK13281.1"/>
    <property type="match status" value="1"/>
</dbReference>
<dbReference type="PANTHER" id="PTHR30420">
    <property type="entry name" value="N-SUCCINYLARGININE DIHYDROLASE"/>
    <property type="match status" value="1"/>
</dbReference>
<dbReference type="PANTHER" id="PTHR30420:SF2">
    <property type="entry name" value="N-SUCCINYLARGININE DIHYDROLASE"/>
    <property type="match status" value="1"/>
</dbReference>
<dbReference type="Pfam" id="PF04996">
    <property type="entry name" value="AstB"/>
    <property type="match status" value="1"/>
</dbReference>
<dbReference type="SUPFAM" id="SSF55909">
    <property type="entry name" value="Pentein"/>
    <property type="match status" value="1"/>
</dbReference>
<proteinExistence type="inferred from homology"/>
<gene>
    <name evidence="1" type="primary">astB</name>
    <name type="ordered locus">Sbal_2497</name>
</gene>
<name>ASTB_SHEB5</name>